<gene>
    <name type="primary">CAV1</name>
</gene>
<protein>
    <recommendedName>
        <fullName>Caveolin-1</fullName>
    </recommendedName>
</protein>
<name>CAV1_SHEEP</name>
<organism>
    <name type="scientific">Ovis aries</name>
    <name type="common">Sheep</name>
    <dbReference type="NCBI Taxonomy" id="9940"/>
    <lineage>
        <taxon>Eukaryota</taxon>
        <taxon>Metazoa</taxon>
        <taxon>Chordata</taxon>
        <taxon>Craniata</taxon>
        <taxon>Vertebrata</taxon>
        <taxon>Euteleostomi</taxon>
        <taxon>Mammalia</taxon>
        <taxon>Eutheria</taxon>
        <taxon>Laurasiatheria</taxon>
        <taxon>Artiodactyla</taxon>
        <taxon>Ruminantia</taxon>
        <taxon>Pecora</taxon>
        <taxon>Bovidae</taxon>
        <taxon>Caprinae</taxon>
        <taxon>Ovis</taxon>
    </lineage>
</organism>
<proteinExistence type="evidence at transcript level"/>
<dbReference type="EMBL" id="AY684195">
    <property type="protein sequence ID" value="AAT81146.1"/>
    <property type="molecule type" value="mRNA"/>
</dbReference>
<dbReference type="EMBL" id="DP000179">
    <property type="protein sequence ID" value="ABI75290.1"/>
    <property type="molecule type" value="Genomic_DNA"/>
</dbReference>
<dbReference type="RefSeq" id="NP_001009477.1">
    <property type="nucleotide sequence ID" value="NM_001009477.1"/>
</dbReference>
<dbReference type="SMR" id="Q6B3Y2"/>
<dbReference type="BioGRID" id="3346040">
    <property type="interactions" value="1"/>
</dbReference>
<dbReference type="STRING" id="9940.ENSOARP00000001394"/>
<dbReference type="PaxDb" id="9940-ENSOARP00000001394"/>
<dbReference type="GeneID" id="445468"/>
<dbReference type="KEGG" id="oas:445468"/>
<dbReference type="CTD" id="857"/>
<dbReference type="eggNOG" id="ENOG502QUK5">
    <property type="taxonomic scope" value="Eukaryota"/>
</dbReference>
<dbReference type="OrthoDB" id="5917823at2759"/>
<dbReference type="Proteomes" id="UP000002356">
    <property type="component" value="Unplaced"/>
</dbReference>
<dbReference type="GO" id="GO:0005901">
    <property type="term" value="C:caveola"/>
    <property type="evidence" value="ECO:0000250"/>
    <property type="project" value="UniProtKB"/>
</dbReference>
<dbReference type="GO" id="GO:0005768">
    <property type="term" value="C:endosome"/>
    <property type="evidence" value="ECO:0000250"/>
    <property type="project" value="UniProtKB"/>
</dbReference>
<dbReference type="GO" id="GO:0005925">
    <property type="term" value="C:focal adhesion"/>
    <property type="evidence" value="ECO:0007669"/>
    <property type="project" value="TreeGrafter"/>
</dbReference>
<dbReference type="GO" id="GO:0000139">
    <property type="term" value="C:Golgi membrane"/>
    <property type="evidence" value="ECO:0007669"/>
    <property type="project" value="UniProtKB-SubCell"/>
</dbReference>
<dbReference type="GO" id="GO:0045121">
    <property type="term" value="C:membrane raft"/>
    <property type="evidence" value="ECO:0000250"/>
    <property type="project" value="UniProtKB"/>
</dbReference>
<dbReference type="GO" id="GO:0048471">
    <property type="term" value="C:perinuclear region of cytoplasm"/>
    <property type="evidence" value="ECO:0007669"/>
    <property type="project" value="TreeGrafter"/>
</dbReference>
<dbReference type="GO" id="GO:0042383">
    <property type="term" value="C:sarcolemma"/>
    <property type="evidence" value="ECO:0007669"/>
    <property type="project" value="TreeGrafter"/>
</dbReference>
<dbReference type="GO" id="GO:0060090">
    <property type="term" value="F:molecular adaptor activity"/>
    <property type="evidence" value="ECO:0007669"/>
    <property type="project" value="TreeGrafter"/>
</dbReference>
<dbReference type="GO" id="GO:0008142">
    <property type="term" value="F:oxysterol binding"/>
    <property type="evidence" value="ECO:0000250"/>
    <property type="project" value="UniProtKB"/>
</dbReference>
<dbReference type="GO" id="GO:0019901">
    <property type="term" value="F:protein kinase binding"/>
    <property type="evidence" value="ECO:0007669"/>
    <property type="project" value="TreeGrafter"/>
</dbReference>
<dbReference type="GO" id="GO:0044325">
    <property type="term" value="F:transmembrane transporter binding"/>
    <property type="evidence" value="ECO:0007669"/>
    <property type="project" value="TreeGrafter"/>
</dbReference>
<dbReference type="GO" id="GO:0070836">
    <property type="term" value="P:caveola assembly"/>
    <property type="evidence" value="ECO:0007669"/>
    <property type="project" value="InterPro"/>
</dbReference>
<dbReference type="GO" id="GO:0030154">
    <property type="term" value="P:cell differentiation"/>
    <property type="evidence" value="ECO:0007669"/>
    <property type="project" value="TreeGrafter"/>
</dbReference>
<dbReference type="GO" id="GO:0001937">
    <property type="term" value="P:negative regulation of endothelial cell proliferation"/>
    <property type="evidence" value="ECO:0007669"/>
    <property type="project" value="TreeGrafter"/>
</dbReference>
<dbReference type="GO" id="GO:0031623">
    <property type="term" value="P:receptor internalization"/>
    <property type="evidence" value="ECO:0000250"/>
    <property type="project" value="UniProtKB"/>
</dbReference>
<dbReference type="GO" id="GO:0051480">
    <property type="term" value="P:regulation of cytosolic calcium ion concentration"/>
    <property type="evidence" value="ECO:0007669"/>
    <property type="project" value="TreeGrafter"/>
</dbReference>
<dbReference type="GO" id="GO:0031295">
    <property type="term" value="P:T cell costimulation"/>
    <property type="evidence" value="ECO:0000250"/>
    <property type="project" value="UniProtKB"/>
</dbReference>
<dbReference type="InterPro" id="IPR001612">
    <property type="entry name" value="Caveolin"/>
</dbReference>
<dbReference type="InterPro" id="IPR018361">
    <property type="entry name" value="Caveolin_CS"/>
</dbReference>
<dbReference type="PANTHER" id="PTHR10844">
    <property type="entry name" value="CAVEOLIN"/>
    <property type="match status" value="1"/>
</dbReference>
<dbReference type="PANTHER" id="PTHR10844:SF18">
    <property type="entry name" value="CAVEOLIN-1"/>
    <property type="match status" value="1"/>
</dbReference>
<dbReference type="Pfam" id="PF01146">
    <property type="entry name" value="Caveolin"/>
    <property type="match status" value="1"/>
</dbReference>
<dbReference type="PROSITE" id="PS01210">
    <property type="entry name" value="CAVEOLIN"/>
    <property type="match status" value="1"/>
</dbReference>
<accession>Q6B3Y2</accession>
<accession>Q09YJ0</accession>
<feature type="initiator methionine" description="Removed" evidence="4">
    <location>
        <position position="1"/>
    </location>
</feature>
<feature type="chain" id="PRO_0000226335" description="Caveolin-1">
    <location>
        <begin position="2"/>
        <end position="178"/>
    </location>
</feature>
<feature type="topological domain" description="Cytoplasmic" evidence="6">
    <location>
        <begin position="2"/>
        <end position="104"/>
    </location>
</feature>
<feature type="intramembrane region" description="Helical" evidence="6">
    <location>
        <begin position="105"/>
        <end position="125"/>
    </location>
</feature>
<feature type="topological domain" description="Cytoplasmic" evidence="6">
    <location>
        <begin position="126"/>
        <end position="178"/>
    </location>
</feature>
<feature type="region of interest" description="Required for homooligomerization" evidence="4">
    <location>
        <begin position="2"/>
        <end position="94"/>
    </location>
</feature>
<feature type="region of interest" description="Interaction with CAVIN3" evidence="4">
    <location>
        <begin position="82"/>
        <end position="94"/>
    </location>
</feature>
<feature type="region of interest" description="Interacts with SPRY1, SPRY2, SPRY3 and SPRY4" evidence="3">
    <location>
        <begin position="131"/>
        <end position="142"/>
    </location>
</feature>
<feature type="region of interest" description="Interacts with SPRY1, SPRY2, and SPRY4" evidence="3">
    <location>
        <begin position="149"/>
        <end position="160"/>
    </location>
</feature>
<feature type="region of interest" description="Interacts with SPRY1, SPRY2, SPRY3 and SPRY4" evidence="3">
    <location>
        <begin position="167"/>
        <end position="178"/>
    </location>
</feature>
<feature type="modified residue" description="N-acetylserine" evidence="4">
    <location>
        <position position="2"/>
    </location>
</feature>
<feature type="modified residue" description="Phosphoserine" evidence="2">
    <location>
        <position position="2"/>
    </location>
</feature>
<feature type="modified residue" description="N6-acetyllysine; alternate" evidence="4">
    <location>
        <position position="5"/>
    </location>
</feature>
<feature type="modified residue" description="Phosphotyrosine" evidence="4">
    <location>
        <position position="6"/>
    </location>
</feature>
<feature type="modified residue" description="Phosphoserine" evidence="3">
    <location>
        <position position="9"/>
    </location>
</feature>
<feature type="modified residue" description="Phosphotyrosine; by ABL1" evidence="3">
    <location>
        <position position="14"/>
    </location>
</feature>
<feature type="modified residue" description="Phosphotyrosine" evidence="4">
    <location>
        <position position="25"/>
    </location>
</feature>
<feature type="lipid moiety-binding region" description="S-palmitoyl cysteine" evidence="1">
    <location>
        <position position="133"/>
    </location>
</feature>
<feature type="lipid moiety-binding region" description="S-palmitoyl cysteine" evidence="1">
    <location>
        <position position="143"/>
    </location>
</feature>
<feature type="lipid moiety-binding region" description="S-palmitoyl cysteine" evidence="1">
    <location>
        <position position="156"/>
    </location>
</feature>
<feature type="cross-link" description="Glycyl lysine isopeptide (Lys-Gly) (interchain with G-Cter in ubiquitin); alternate" evidence="4">
    <location>
        <position position="5"/>
    </location>
</feature>
<feature type="cross-link" description="Glycyl lysine isopeptide (Lys-Gly) (interchain with G-Cter in ubiquitin)" evidence="4">
    <location>
        <position position="26"/>
    </location>
</feature>
<feature type="cross-link" description="Glycyl lysine isopeptide (Lys-Gly) (interchain with G-Cter in ubiquitin)" evidence="4">
    <location>
        <position position="30"/>
    </location>
</feature>
<feature type="cross-link" description="Glycyl lysine isopeptide (Lys-Gly) (interchain with G-Cter in ubiquitin)" evidence="4">
    <location>
        <position position="39"/>
    </location>
</feature>
<feature type="cross-link" description="Glycyl lysine isopeptide (Lys-Gly) (interchain with G-Cter in ubiquitin)" evidence="4">
    <location>
        <position position="47"/>
    </location>
</feature>
<feature type="cross-link" description="Glycyl lysine isopeptide (Lys-Gly) (interchain with G-Cter in ubiquitin)" evidence="4">
    <location>
        <position position="57"/>
    </location>
</feature>
<feature type="sequence conflict" description="In Ref. 2; ABI75290." evidence="7" ref="2">
    <original>G</original>
    <variation>S</variation>
    <location>
        <position position="83"/>
    </location>
</feature>
<feature type="sequence conflict" description="In Ref. 2; ABI75290." evidence="7" ref="2">
    <original>T</original>
    <variation>M</variation>
    <location>
        <position position="174"/>
    </location>
</feature>
<keyword id="KW-0007">Acetylation</keyword>
<keyword id="KW-1003">Cell membrane</keyword>
<keyword id="KW-0333">Golgi apparatus</keyword>
<keyword id="KW-1017">Isopeptide bond</keyword>
<keyword id="KW-0449">Lipoprotein</keyword>
<keyword id="KW-0472">Membrane</keyword>
<keyword id="KW-0564">Palmitate</keyword>
<keyword id="KW-0597">Phosphoprotein</keyword>
<keyword id="KW-1185">Reference proteome</keyword>
<keyword id="KW-0832">Ubl conjugation</keyword>
<comment type="function">
    <text evidence="3 4">May act as a scaffolding protein within caveolar membranes. Forms a stable heterooligomeric complex with CAV2 that targets to lipid rafts and drives caveolae formation. Mediates the recruitment of CAVIN proteins (CAVIN1/2/3/4) to the caveolae (By similarity). Interacts directly with G-protein alpha subunits and can functionally regulate their activity (By similarity). Involved in the costimulatory signal essential for T-cell receptor (TCR)-mediated T-cell activation. Its binding to DPP4 induces T-cell proliferation and NF-kappa-B activation in a T-cell receptor/CD3-dependent manner (By similarity). Recruits CTNNB1 to caveolar membranes and may regulate CTNNB1-mediated signaling through the Wnt pathway (By similarity). Negatively regulates TGFB1-mediated activation of SMAD2/3 by mediating the internalization of TGFBR1 from membrane rafts leading to its subsequent degradation (By similarity). Binds 20(S)-hydroxycholesterol (20(S)-OHC) (By similarity).</text>
</comment>
<comment type="subunit">
    <text evidence="2 3 4 5">Homooligomer. Interacts with GLIPR2. Interacts with NOSTRIN (By similarity). Interacts with SNAP25 and STX1A (By similarity). Interacts (via the N-terminus) with DPP4; the interaction is direct (By similarity). Interacts with CTNNB1, CDH1 and JUP. Interacts with PACSIN2; this interaction induces membrane tubulation (By similarity). Interacts with SLC7A9 (By similarity). Interacts with BMX and BTK. Interacts with TGFBR1. Interacts with CAVIN3 (via leucine-zipper domain) in a cholesterol-sensitive manner. Interacts with CAVIN1. Interacts with EHD2 in a cholesterol-dependent manner. Forms a ternary complex with UBXN6 and VCP; mediates CAV1 targeting to lysosomes for degradation. Interacts with ABCG1; this interaction regulates ABCG1-mediated cholesterol efflux (By similarity). Interacts with NEU3; this interaction enhances NEU3 sialidase activity within caveola. Interacts (via C-terminus) with SPRY1, SPRY2 (via C-terminus), SPRY3, and SPRY4 (By similarity). Interacts with IGFBP5; this interaction allows trafficking of IGFBP5 from the plasma membrane to the nucleus (By similarity).</text>
</comment>
<comment type="subcellular location">
    <subcellularLocation>
        <location evidence="1">Golgi apparatus membrane</location>
        <topology evidence="1">Peripheral membrane protein</topology>
    </subcellularLocation>
    <subcellularLocation>
        <location evidence="1">Cell membrane</location>
        <topology evidence="1">Peripheral membrane protein</topology>
    </subcellularLocation>
    <subcellularLocation>
        <location evidence="3">Membrane</location>
        <location evidence="3">Caveola</location>
        <topology evidence="1">Peripheral membrane protein</topology>
    </subcellularLocation>
    <subcellularLocation>
        <location evidence="4">Membrane raft</location>
    </subcellularLocation>
    <text evidence="1">Colocalized with DPP4 in membrane rafts. Potential hairpin-like structure in the membrane. Membrane protein of caveolae (By similarity).</text>
</comment>
<comment type="PTM">
    <text evidence="4">Phosphorylated at Tyr-14 by ABL1 in response to oxidative stress.</text>
</comment>
<comment type="PTM">
    <text evidence="4">Ubiquitinated. Undergo monoubiquitination and multi- and/or polyubiquitination. Monoubiquitination of N-terminal lysines promotes integration in a ternary complex with UBXN6 and VCP which promotes oligomeric CAV1 targeting to lysosomes for degradation. Ubiquitinated by ZNRF1; leading to degradation and modulation of the TLR4-mediated immune response.</text>
</comment>
<comment type="similarity">
    <text evidence="7">Belongs to the caveolin family.</text>
</comment>
<reference key="1">
    <citation type="journal article" date="2001" name="Mol. Cell. Endocrinol.">
        <title>Ovine caveolin-1: cDNA cloning, E. coli expression, and association with endothelial nitric oxide synthase.</title>
        <authorList>
            <person name="Chen D."/>
            <person name="Zangl A.L."/>
            <person name="Zhao Q."/>
            <person name="Markley J.L."/>
            <person name="Zheng J."/>
            <person name="Bird I.M."/>
            <person name="Magness R.R."/>
        </authorList>
    </citation>
    <scope>NUCLEOTIDE SEQUENCE [MRNA]</scope>
</reference>
<reference key="2">
    <citation type="submission" date="2006-09" db="EMBL/GenBank/DDBJ databases">
        <title>NISC comparative sequencing initiative.</title>
        <authorList>
            <person name="Antonellis A."/>
            <person name="Ayele K."/>
            <person name="Benjamin B."/>
            <person name="Blakesley R.W."/>
            <person name="Boakye A."/>
            <person name="Bouffard G.G."/>
            <person name="Brinkley C."/>
            <person name="Brooks S."/>
            <person name="Chu G."/>
            <person name="Coleman H."/>
            <person name="Engle J."/>
            <person name="Gestole M."/>
            <person name="Greene A."/>
            <person name="Guan X."/>
            <person name="Gupta J."/>
            <person name="Haghighi P."/>
            <person name="Han J."/>
            <person name="Hansen N."/>
            <person name="Ho S.-L."/>
            <person name="Hu P."/>
            <person name="Hunter G."/>
            <person name="Hurle B."/>
            <person name="Idol J.R."/>
            <person name="Kwong P."/>
            <person name="Laric P."/>
            <person name="Larson S."/>
            <person name="Lee-Lin S.-Q."/>
            <person name="Legaspi R."/>
            <person name="Madden M."/>
            <person name="Maduro Q.L."/>
            <person name="Maduro V.B."/>
            <person name="Margulies E.H."/>
            <person name="Masiello C."/>
            <person name="Maskeri B."/>
            <person name="McDowell J."/>
            <person name="Mojidi H.A."/>
            <person name="Mullikin J.C."/>
            <person name="Oestreicher J.S."/>
            <person name="Park M."/>
            <person name="Portnoy M.E."/>
            <person name="Prasad A."/>
            <person name="Puri O."/>
            <person name="Reddix-Dugue N."/>
            <person name="Schandler K."/>
            <person name="Schueler M.G."/>
            <person name="Sison C."/>
            <person name="Stantripop S."/>
            <person name="Stephen E."/>
            <person name="Taye A."/>
            <person name="Thomas J.W."/>
            <person name="Thomas P.J."/>
            <person name="Tsipouri V."/>
            <person name="Ung L."/>
            <person name="Vogt J.L."/>
            <person name="Wetherby K.D."/>
            <person name="Young A."/>
            <person name="Green E.D."/>
        </authorList>
    </citation>
    <scope>NUCLEOTIDE SEQUENCE [LARGE SCALE GENOMIC DNA]</scope>
</reference>
<evidence type="ECO:0000250" key="1"/>
<evidence type="ECO:0000250" key="2">
    <source>
        <dbReference type="UniProtKB" id="P41350"/>
    </source>
</evidence>
<evidence type="ECO:0000250" key="3">
    <source>
        <dbReference type="UniProtKB" id="P49817"/>
    </source>
</evidence>
<evidence type="ECO:0000250" key="4">
    <source>
        <dbReference type="UniProtKB" id="Q03135"/>
    </source>
</evidence>
<evidence type="ECO:0000250" key="5">
    <source>
        <dbReference type="UniProtKB" id="Q2IBA5"/>
    </source>
</evidence>
<evidence type="ECO:0000255" key="6"/>
<evidence type="ECO:0000305" key="7"/>
<sequence length="178" mass="20595">MSGGKYVDSEGHLYTVPIREQGNIYKPNNKAMAEEMNEKQVYDAHTKEIDLVNRDPKHLNDDVVKIDFEDVIAEPEGTHSFDGIWKASFTTFTVTKYWFYRLLSALFGIPMALIWGIYFAILSFLHIWAVVPCIKSFLIEIQCISRVYSIYVHTFCDPLFEAIGKIFSNIRINTQKEI</sequence>